<gene>
    <name evidence="4" type="primary">cyp125</name>
    <name evidence="4" type="synonym">cyp125A3</name>
    <name evidence="7" type="ordered locus">MSMEG_5995</name>
    <name evidence="8" type="ordered locus">MSMEI_5834</name>
</gene>
<reference key="1">
    <citation type="submission" date="2006-10" db="EMBL/GenBank/DDBJ databases">
        <authorList>
            <person name="Fleischmann R.D."/>
            <person name="Dodson R.J."/>
            <person name="Haft D.H."/>
            <person name="Merkel J.S."/>
            <person name="Nelson W.C."/>
            <person name="Fraser C.M."/>
        </authorList>
    </citation>
    <scope>NUCLEOTIDE SEQUENCE [LARGE SCALE GENOMIC DNA]</scope>
    <source>
        <strain>ATCC 700084 / mc(2)155</strain>
    </source>
</reference>
<reference key="2">
    <citation type="journal article" date="2007" name="Genome Biol.">
        <title>Interrupted coding sequences in Mycobacterium smegmatis: authentic mutations or sequencing errors?</title>
        <authorList>
            <person name="Deshayes C."/>
            <person name="Perrodou E."/>
            <person name="Gallien S."/>
            <person name="Euphrasie D."/>
            <person name="Schaeffer C."/>
            <person name="Van-Dorsselaer A."/>
            <person name="Poch O."/>
            <person name="Lecompte O."/>
            <person name="Reyrat J.-M."/>
        </authorList>
    </citation>
    <scope>NUCLEOTIDE SEQUENCE [LARGE SCALE GENOMIC DNA]</scope>
    <source>
        <strain>ATCC 700084 / mc(2)155</strain>
    </source>
</reference>
<reference key="3">
    <citation type="journal article" date="2009" name="Genome Res.">
        <title>Ortho-proteogenomics: multiple proteomes investigation through orthology and a new MS-based protocol.</title>
        <authorList>
            <person name="Gallien S."/>
            <person name="Perrodou E."/>
            <person name="Carapito C."/>
            <person name="Deshayes C."/>
            <person name="Reyrat J.-M."/>
            <person name="Van Dorsselaer A."/>
            <person name="Poch O."/>
            <person name="Schaeffer C."/>
            <person name="Lecompte O."/>
        </authorList>
    </citation>
    <scope>NUCLEOTIDE SEQUENCE [LARGE SCALE GENOMIC DNA]</scope>
    <source>
        <strain>ATCC 700084 / mc(2)155</strain>
    </source>
</reference>
<reference key="4">
    <citation type="journal article" date="2013" name="Environ. Microbiol.">
        <title>A highly conserved mycobacterial cholesterol catabolic pathway.</title>
        <authorList>
            <person name="Garcia-Fernandez E."/>
            <person name="Frank D.J."/>
            <person name="Galan B."/>
            <person name="Kells P.M."/>
            <person name="Podust L.M."/>
            <person name="Garcia J.L."/>
            <person name="Ortiz de Montellano P.R."/>
        </authorList>
    </citation>
    <scope>X-RAY CRYSTALLOGRAPHY (2.00 ANGSTROMS) IN COMPLEX WITH HEME</scope>
    <scope>FUNCTION</scope>
    <scope>CATALYTIC ACTIVITY</scope>
    <scope>BIOPHYSICOCHEMICAL PROPERTIES</scope>
    <scope>COFACTOR</scope>
    <scope>INDUCTION</scope>
    <scope>DISRUPTION PHENOTYPE</scope>
    <scope>SUBSTRATE SPECIFICITY</scope>
    <scope>PATHWAY</scope>
</reference>
<reference evidence="10" key="5">
    <citation type="journal article" date="2015" name="Biochemistry">
        <title>Cytochrome P450 125A4, the Third Cholesterol C-26 Hydroxylase from Mycobacterium smegmatis.</title>
        <authorList>
            <person name="Frank D.J."/>
            <person name="Waddling C.A."/>
            <person name="La M."/>
            <person name="Ortiz de Montellano P.R."/>
        </authorList>
    </citation>
    <scope>X-RAY CRYSTALLOGRAPHY (2.26 ANGSTROMS) IN COMPLEX WITH HEME</scope>
    <scope>COFACTOR</scope>
</reference>
<comment type="function">
    <text evidence="2">Involved in the utilization of cholesterol as the sole carbon and energy source by degrading the side chain. Primarily catalyzes the sequential oxidation of the terminal methyl of cholest-4-en-3-one into (25S)-26-hydroxycholest-4-en-3-one (alcohol), (25S)-26-oxocholest-4-en-3-one (aldehyde), to finally yield the carboxylic acid (25S)-3-oxocholest-4-en-26-oate. Also able to sequentially oxidize cholesterol itself, not only cholest-4-en-3-one.</text>
</comment>
<comment type="catalytic activity">
    <reaction evidence="1 6">
        <text>cholest-4-en-3-one + 6 reduced [2Fe-2S]-[ferredoxin] + 3 O2 + 5 H(+) = (25S)-3-oxocholest-4-en-26-oate + 6 oxidized [2Fe-2S]-[ferredoxin] + 4 H2O</text>
        <dbReference type="Rhea" id="RHEA:51564"/>
        <dbReference type="Rhea" id="RHEA-COMP:10000"/>
        <dbReference type="Rhea" id="RHEA-COMP:10001"/>
        <dbReference type="ChEBI" id="CHEBI:15377"/>
        <dbReference type="ChEBI" id="CHEBI:15378"/>
        <dbReference type="ChEBI" id="CHEBI:15379"/>
        <dbReference type="ChEBI" id="CHEBI:16175"/>
        <dbReference type="ChEBI" id="CHEBI:33737"/>
        <dbReference type="ChEBI" id="CHEBI:33738"/>
        <dbReference type="ChEBI" id="CHEBI:71541"/>
        <dbReference type="EC" id="1.14.15.29"/>
    </reaction>
</comment>
<comment type="cofactor">
    <cofactor evidence="2 3">
        <name>heme</name>
        <dbReference type="ChEBI" id="CHEBI:30413"/>
    </cofactor>
</comment>
<comment type="biophysicochemical properties">
    <kinetics>
        <KM evidence="2">14 uM for cholest-4-en-3-one</KM>
    </kinetics>
</comment>
<comment type="pathway">
    <text evidence="4">Steroid metabolism; cholesterol degradation.</text>
</comment>
<comment type="induction">
    <text evidence="2">By cholesterol.</text>
</comment>
<comment type="disruption phenotype">
    <text evidence="2">Cells lacking this gene show lower accumulation of 26-hydroxycholest-4-en-3-one and cholest-4-en-3-one-26-oate when compared with the wild-type and display a strong induction of cyp142A2. The levels of 26-hydroxycholest-4-en-3-one and cholest-4-on-3-one-26-oate are drastically reduced in cells lacking both cyp125A3 and cyp142A2.</text>
</comment>
<comment type="similarity">
    <text evidence="5">Belongs to the cytochrome P450 family.</text>
</comment>
<sequence>MPTPNIPSDFDFLDATLNLERLPVEELAELRKSEPIHWVDVPGGTGGFGDKGYWLVTKHADVKEVSRRSDVFGSSPDGAIPVWPQDMTREAVDLQRAVLLNMDAPQHTRLRKIISRGFTPRAIGRLEDELRSRAQKIAQTAAAQGAGDFVEQVSCELPLQAIAELLGVPQDDRDKLFRWSNEMTAGEDPEYADVDPAMSSFELISYAMKMAEERAVNPTEDIVTKLIEADIDGEKLSDDEFGFFVVMLAVAGNETTRNSITHGMIAFAQNPDQWELYKKERPETAADEIVRWATPVSAFQRTALEDVELGGVQIKKGQRVVMSYRSANFDEEVFEDPHTFNILRSPNPHVGFGGTGAHYCIGANLARMTINLIFNAIADNMPDLKPIGAPERLKSGWLNGIKHWQVDYTGAGKASVSGAPGTCPVAH</sequence>
<name>CP125_MYCS2</name>
<dbReference type="EC" id="1.14.15.29" evidence="1 6"/>
<dbReference type="EMBL" id="CP000480">
    <property type="protein sequence ID" value="ABK74881.1"/>
    <property type="molecule type" value="Genomic_DNA"/>
</dbReference>
<dbReference type="EMBL" id="CP001663">
    <property type="protein sequence ID" value="AFP42267.1"/>
    <property type="molecule type" value="Genomic_DNA"/>
</dbReference>
<dbReference type="RefSeq" id="WP_011730960.1">
    <property type="nucleotide sequence ID" value="NZ_SIJM01000017.1"/>
</dbReference>
<dbReference type="RefSeq" id="YP_890221.1">
    <property type="nucleotide sequence ID" value="NC_008596.1"/>
</dbReference>
<dbReference type="PDB" id="4APY">
    <property type="method" value="X-ray"/>
    <property type="resolution" value="2.00 A"/>
    <property type="chains" value="A=1-427"/>
</dbReference>
<dbReference type="PDB" id="5DQN">
    <property type="method" value="X-ray"/>
    <property type="resolution" value="2.26 A"/>
    <property type="chains" value="A=1-426"/>
</dbReference>
<dbReference type="PDBsum" id="4APY"/>
<dbReference type="PDBsum" id="5DQN"/>
<dbReference type="SMR" id="A0R4Y3"/>
<dbReference type="STRING" id="246196.MSMEG_5995"/>
<dbReference type="PaxDb" id="246196-MSMEI_5834"/>
<dbReference type="KEGG" id="msb:LJ00_29640"/>
<dbReference type="KEGG" id="msg:MSMEI_5834"/>
<dbReference type="KEGG" id="msm:MSMEG_5995"/>
<dbReference type="PATRIC" id="fig|246196.19.peg.5831"/>
<dbReference type="eggNOG" id="COG2124">
    <property type="taxonomic scope" value="Bacteria"/>
</dbReference>
<dbReference type="OrthoDB" id="5241086at2"/>
<dbReference type="BRENDA" id="1.14.15.29">
    <property type="organism ID" value="3512"/>
</dbReference>
<dbReference type="UniPathway" id="UPA01058"/>
<dbReference type="EvolutionaryTrace" id="A0R4Y3"/>
<dbReference type="Proteomes" id="UP000000757">
    <property type="component" value="Chromosome"/>
</dbReference>
<dbReference type="Proteomes" id="UP000006158">
    <property type="component" value="Chromosome"/>
</dbReference>
<dbReference type="GO" id="GO:0036199">
    <property type="term" value="F:cholest-4-en-3-one 26-monooxygenase activity"/>
    <property type="evidence" value="ECO:0007669"/>
    <property type="project" value="UniProtKB-EC"/>
</dbReference>
<dbReference type="GO" id="GO:0020037">
    <property type="term" value="F:heme binding"/>
    <property type="evidence" value="ECO:0007669"/>
    <property type="project" value="InterPro"/>
</dbReference>
<dbReference type="GO" id="GO:0005506">
    <property type="term" value="F:iron ion binding"/>
    <property type="evidence" value="ECO:0007669"/>
    <property type="project" value="InterPro"/>
</dbReference>
<dbReference type="GO" id="GO:0008395">
    <property type="term" value="F:steroid hydroxylase activity"/>
    <property type="evidence" value="ECO:0007669"/>
    <property type="project" value="TreeGrafter"/>
</dbReference>
<dbReference type="GO" id="GO:0006707">
    <property type="term" value="P:cholesterol catabolic process"/>
    <property type="evidence" value="ECO:0007669"/>
    <property type="project" value="UniProtKB-UniPathway"/>
</dbReference>
<dbReference type="CDD" id="cd11033">
    <property type="entry name" value="CYP142-like"/>
    <property type="match status" value="1"/>
</dbReference>
<dbReference type="FunFam" id="1.10.630.10:FF:000018">
    <property type="entry name" value="Cytochrome P450 monooxygenase"/>
    <property type="match status" value="1"/>
</dbReference>
<dbReference type="Gene3D" id="1.10.630.10">
    <property type="entry name" value="Cytochrome P450"/>
    <property type="match status" value="1"/>
</dbReference>
<dbReference type="InterPro" id="IPR001128">
    <property type="entry name" value="Cyt_P450"/>
</dbReference>
<dbReference type="InterPro" id="IPR002397">
    <property type="entry name" value="Cyt_P450_B"/>
</dbReference>
<dbReference type="InterPro" id="IPR036396">
    <property type="entry name" value="Cyt_P450_sf"/>
</dbReference>
<dbReference type="PANTHER" id="PTHR46696:SF4">
    <property type="entry name" value="BIOTIN BIOSYNTHESIS CYTOCHROME P450"/>
    <property type="match status" value="1"/>
</dbReference>
<dbReference type="PANTHER" id="PTHR46696">
    <property type="entry name" value="P450, PUTATIVE (EUROFUNG)-RELATED"/>
    <property type="match status" value="1"/>
</dbReference>
<dbReference type="Pfam" id="PF00067">
    <property type="entry name" value="p450"/>
    <property type="match status" value="1"/>
</dbReference>
<dbReference type="PRINTS" id="PR00359">
    <property type="entry name" value="BP450"/>
</dbReference>
<dbReference type="SUPFAM" id="SSF48264">
    <property type="entry name" value="Cytochrome P450"/>
    <property type="match status" value="1"/>
</dbReference>
<evidence type="ECO:0000250" key="1">
    <source>
        <dbReference type="UniProtKB" id="P9WPP1"/>
    </source>
</evidence>
<evidence type="ECO:0000269" key="2">
    <source>
    </source>
</evidence>
<evidence type="ECO:0000269" key="3">
    <source>
    </source>
</evidence>
<evidence type="ECO:0000303" key="4">
    <source>
    </source>
</evidence>
<evidence type="ECO:0000305" key="5"/>
<evidence type="ECO:0000305" key="6">
    <source>
    </source>
</evidence>
<evidence type="ECO:0000312" key="7">
    <source>
        <dbReference type="EMBL" id="ABK74881.1"/>
    </source>
</evidence>
<evidence type="ECO:0000312" key="8">
    <source>
        <dbReference type="EMBL" id="AFP42267.1"/>
    </source>
</evidence>
<evidence type="ECO:0007744" key="9">
    <source>
        <dbReference type="PDB" id="4APY"/>
    </source>
</evidence>
<evidence type="ECO:0007744" key="10">
    <source>
        <dbReference type="PDB" id="5DQN"/>
    </source>
</evidence>
<evidence type="ECO:0007829" key="11">
    <source>
        <dbReference type="PDB" id="4APY"/>
    </source>
</evidence>
<evidence type="ECO:0007829" key="12">
    <source>
        <dbReference type="PDB" id="5DQN"/>
    </source>
</evidence>
<organism>
    <name type="scientific">Mycolicibacterium smegmatis (strain ATCC 700084 / mc(2)155)</name>
    <name type="common">Mycobacterium smegmatis</name>
    <dbReference type="NCBI Taxonomy" id="246196"/>
    <lineage>
        <taxon>Bacteria</taxon>
        <taxon>Bacillati</taxon>
        <taxon>Actinomycetota</taxon>
        <taxon>Actinomycetes</taxon>
        <taxon>Mycobacteriales</taxon>
        <taxon>Mycobacteriaceae</taxon>
        <taxon>Mycolicibacterium</taxon>
    </lineage>
</organism>
<feature type="chain" id="PRO_0000438723" description="Steroid C26-monooxygenase">
    <location>
        <begin position="1"/>
        <end position="427"/>
    </location>
</feature>
<feature type="binding site" description="axial binding residue" evidence="2 9 10">
    <location>
        <position position="360"/>
    </location>
    <ligand>
        <name>heme</name>
        <dbReference type="ChEBI" id="CHEBI:30413"/>
    </ligand>
    <ligandPart>
        <name>Fe</name>
        <dbReference type="ChEBI" id="CHEBI:18248"/>
    </ligandPart>
</feature>
<feature type="sequence conflict" description="In Ref. 2; AFP42267." evidence="5" ref="2">
    <original>M</original>
    <variation>MHFEERTPM</variation>
    <location>
        <position position="1"/>
    </location>
</feature>
<feature type="strand" evidence="12">
    <location>
        <begin position="4"/>
        <end position="6"/>
    </location>
</feature>
<feature type="helix" evidence="11">
    <location>
        <begin position="15"/>
        <end position="20"/>
    </location>
</feature>
<feature type="helix" evidence="11">
    <location>
        <begin position="24"/>
        <end position="33"/>
    </location>
</feature>
<feature type="strand" evidence="11">
    <location>
        <begin position="35"/>
        <end position="40"/>
    </location>
</feature>
<feature type="turn" evidence="11">
    <location>
        <begin position="46"/>
        <end position="48"/>
    </location>
</feature>
<feature type="strand" evidence="11">
    <location>
        <begin position="51"/>
        <end position="56"/>
    </location>
</feature>
<feature type="helix" evidence="11">
    <location>
        <begin position="59"/>
        <end position="67"/>
    </location>
</feature>
<feature type="turn" evidence="11">
    <location>
        <begin position="69"/>
        <end position="71"/>
    </location>
</feature>
<feature type="strand" evidence="11">
    <location>
        <begin position="72"/>
        <end position="74"/>
    </location>
</feature>
<feature type="turn" evidence="11">
    <location>
        <begin position="75"/>
        <end position="77"/>
    </location>
</feature>
<feature type="helix" evidence="11">
    <location>
        <begin position="89"/>
        <end position="93"/>
    </location>
</feature>
<feature type="helix" evidence="11">
    <location>
        <begin position="95"/>
        <end position="97"/>
    </location>
</feature>
<feature type="helix" evidence="11">
    <location>
        <begin position="99"/>
        <end position="101"/>
    </location>
</feature>
<feature type="helix" evidence="11">
    <location>
        <begin position="106"/>
        <end position="114"/>
    </location>
</feature>
<feature type="helix" evidence="11">
    <location>
        <begin position="115"/>
        <end position="118"/>
    </location>
</feature>
<feature type="helix" evidence="11">
    <location>
        <begin position="120"/>
        <end position="124"/>
    </location>
</feature>
<feature type="helix" evidence="11">
    <location>
        <begin position="127"/>
        <end position="142"/>
    </location>
</feature>
<feature type="strand" evidence="11">
    <location>
        <begin position="145"/>
        <end position="148"/>
    </location>
</feature>
<feature type="helix" evidence="11">
    <location>
        <begin position="149"/>
        <end position="152"/>
    </location>
</feature>
<feature type="turn" evidence="12">
    <location>
        <begin position="153"/>
        <end position="155"/>
    </location>
</feature>
<feature type="helix" evidence="11">
    <location>
        <begin position="156"/>
        <end position="166"/>
    </location>
</feature>
<feature type="helix" evidence="11">
    <location>
        <begin position="170"/>
        <end position="172"/>
    </location>
</feature>
<feature type="helix" evidence="11">
    <location>
        <begin position="173"/>
        <end position="183"/>
    </location>
</feature>
<feature type="helix" evidence="11">
    <location>
        <begin position="189"/>
        <end position="191"/>
    </location>
</feature>
<feature type="helix" evidence="11">
    <location>
        <begin position="196"/>
        <end position="216"/>
    </location>
</feature>
<feature type="helix" evidence="11">
    <location>
        <begin position="222"/>
        <end position="227"/>
    </location>
</feature>
<feature type="helix" evidence="11">
    <location>
        <begin position="238"/>
        <end position="251"/>
    </location>
</feature>
<feature type="helix" evidence="11">
    <location>
        <begin position="254"/>
        <end position="269"/>
    </location>
</feature>
<feature type="helix" evidence="11">
    <location>
        <begin position="271"/>
        <end position="280"/>
    </location>
</feature>
<feature type="helix" evidence="11">
    <location>
        <begin position="285"/>
        <end position="293"/>
    </location>
</feature>
<feature type="strand" evidence="11">
    <location>
        <begin position="298"/>
        <end position="305"/>
    </location>
</feature>
<feature type="strand" evidence="11">
    <location>
        <begin position="307"/>
        <end position="309"/>
    </location>
</feature>
<feature type="strand" evidence="11">
    <location>
        <begin position="312"/>
        <end position="314"/>
    </location>
</feature>
<feature type="strand" evidence="11">
    <location>
        <begin position="319"/>
        <end position="323"/>
    </location>
</feature>
<feature type="helix" evidence="11">
    <location>
        <begin position="324"/>
        <end position="327"/>
    </location>
</feature>
<feature type="turn" evidence="11">
    <location>
        <begin position="331"/>
        <end position="333"/>
    </location>
</feature>
<feature type="strand" evidence="11">
    <location>
        <begin position="334"/>
        <end position="336"/>
    </location>
</feature>
<feature type="strand" evidence="11">
    <location>
        <begin position="354"/>
        <end position="356"/>
    </location>
</feature>
<feature type="helix" evidence="11">
    <location>
        <begin position="363"/>
        <end position="380"/>
    </location>
</feature>
<feature type="strand" evidence="11">
    <location>
        <begin position="385"/>
        <end position="388"/>
    </location>
</feature>
<feature type="strand" evidence="11">
    <location>
        <begin position="396"/>
        <end position="398"/>
    </location>
</feature>
<feature type="strand" evidence="11">
    <location>
        <begin position="401"/>
        <end position="403"/>
    </location>
</feature>
<feature type="strand" evidence="11">
    <location>
        <begin position="405"/>
        <end position="412"/>
    </location>
</feature>
<proteinExistence type="evidence at protein level"/>
<protein>
    <recommendedName>
        <fullName evidence="4">Steroid C26-monooxygenase</fullName>
        <ecNumber evidence="1 6">1.14.15.29</ecNumber>
    </recommendedName>
    <alternativeName>
        <fullName evidence="4">Cholest-4-en-3-one C26-monooxygenase</fullName>
    </alternativeName>
    <alternativeName>
        <fullName evidence="1 6">Cholest-4-en-3-one C26-monooxygenase [(25S)-3-oxocholest-4-en-26-oate forming]</fullName>
    </alternativeName>
    <alternativeName>
        <fullName evidence="4">Cholesterol C26-monooxygenase</fullName>
    </alternativeName>
    <alternativeName>
        <fullName evidence="1 6">Cholesterol C26-monooxygenase [(25S)-3beta-hydroxycholest-5-en-26-oate forming]</fullName>
    </alternativeName>
    <alternativeName>
        <fullName evidence="4">Cytochrome P450 125</fullName>
    </alternativeName>
    <alternativeName>
        <fullName evidence="1">Steroid C27-monooxygenase</fullName>
    </alternativeName>
</protein>
<keyword id="KW-0002">3D-structure</keyword>
<keyword id="KW-0153">Cholesterol metabolism</keyword>
<keyword id="KW-0349">Heme</keyword>
<keyword id="KW-0408">Iron</keyword>
<keyword id="KW-0442">Lipid degradation</keyword>
<keyword id="KW-0443">Lipid metabolism</keyword>
<keyword id="KW-0479">Metal-binding</keyword>
<keyword id="KW-0503">Monooxygenase</keyword>
<keyword id="KW-0520">NAD</keyword>
<keyword id="KW-0560">Oxidoreductase</keyword>
<keyword id="KW-1185">Reference proteome</keyword>
<keyword id="KW-0753">Steroid metabolism</keyword>
<keyword id="KW-1207">Sterol metabolism</keyword>
<accession>A0R4Y3</accession>
<accession>I7G9K1</accession>